<keyword id="KW-0903">Direct protein sequencing</keyword>
<keyword id="KW-0256">Endoplasmic reticulum</keyword>
<keyword id="KW-0325">Glycoprotein</keyword>
<keyword id="KW-0472">Membrane</keyword>
<keyword id="KW-0509">mRNA transport</keyword>
<keyword id="KW-0906">Nuclear pore complex</keyword>
<keyword id="KW-0539">Nucleus</keyword>
<keyword id="KW-0597">Phosphoprotein</keyword>
<keyword id="KW-0653">Protein transport</keyword>
<keyword id="KW-1185">Reference proteome</keyword>
<keyword id="KW-0732">Signal</keyword>
<keyword id="KW-0811">Translocation</keyword>
<keyword id="KW-0812">Transmembrane</keyword>
<keyword id="KW-1133">Transmembrane helix</keyword>
<keyword id="KW-0813">Transport</keyword>
<evidence type="ECO:0000250" key="1"/>
<evidence type="ECO:0000250" key="2">
    <source>
        <dbReference type="UniProtKB" id="Q8TEM1"/>
    </source>
</evidence>
<evidence type="ECO:0000250" key="3">
    <source>
        <dbReference type="UniProtKB" id="Q9QY81"/>
    </source>
</evidence>
<evidence type="ECO:0000255" key="4"/>
<evidence type="ECO:0000256" key="5">
    <source>
        <dbReference type="SAM" id="MobiDB-lite"/>
    </source>
</evidence>
<evidence type="ECO:0000269" key="6">
    <source>
    </source>
</evidence>
<evidence type="ECO:0000269" key="7">
    <source>
    </source>
</evidence>
<evidence type="ECO:0000269" key="8">
    <source>
    </source>
</evidence>
<evidence type="ECO:0000305" key="9"/>
<evidence type="ECO:0000305" key="10">
    <source>
    </source>
</evidence>
<name>PO210_RAT</name>
<gene>
    <name type="primary">Nup210</name>
    <name type="synonym">Gp210</name>
    <name type="synonym">Pom210</name>
</gene>
<reference key="1">
    <citation type="journal article" date="1989" name="J. Cell Biol.">
        <title>Primary structure analysis of an integral membrane glycoprotein of the nuclear pore.</title>
        <authorList>
            <person name="Wozniak R.W."/>
            <person name="Bartnik E."/>
            <person name="Blobel G."/>
        </authorList>
    </citation>
    <scope>NUCLEOTIDE SEQUENCE [MRNA]</scope>
    <scope>PROTEIN SEQUENCE OF 26-49; 195-215; 211-235; 282-298; 584-594; 849-868; 1163-1174; 1179-1189; 1294-1329 AND 1660-1669</scope>
    <scope>GLYCOSYLATION</scope>
    <source>
        <tissue>Liver</tissue>
    </source>
</reference>
<reference key="2">
    <citation type="journal article" date="1992" name="J. Cell Biol.">
        <title>The single transmembrane segment of gp210 is sufficient for sorting to the pore membrane domain of the nuclear envelope.</title>
        <authorList>
            <person name="Wozniak R.W."/>
            <person name="Blobel G."/>
        </authorList>
    </citation>
    <scope>TOPOLOGY</scope>
</reference>
<reference key="3">
    <citation type="journal article" date="1996" name="Biochemistry">
        <title>Cell cycle-dependent phosphorylation of nucleoporins and nuclear pore membrane protein Gp210.</title>
        <authorList>
            <person name="Favreau C."/>
            <person name="Worman H.J."/>
            <person name="Wozniak R.W."/>
            <person name="Frappier T."/>
            <person name="Courvalin J.-C."/>
        </authorList>
    </citation>
    <scope>PHOSPHORYLATION AT SER-1880</scope>
</reference>
<reference key="4">
    <citation type="journal article" date="2001" name="Eur. J. Biochem.">
        <title>Biochemical characterization of nuclear pore complex protein gp210 oligomers.</title>
        <authorList>
            <person name="Favreau C."/>
            <person name="Bastos R."/>
            <person name="Cartaud J."/>
            <person name="Courvalin J.-C."/>
            <person name="Mustonen P."/>
        </authorList>
    </citation>
    <scope>SUBUNIT</scope>
</reference>
<sequence>MARASLIQPGLWALLLLQAVGPAVAAKLNIPKVLLPFTRATRVNFTLEASEGCYRWSSTRPEVASIEPLGSSEQQCSQKAVVQARLTQPARLTSIIFAEDITTGQVLRCDAIVDLIHGIQIVSTTRELYLEDSPLELKIQALDSEGNTFSTLAGLVFDWTIVKDTEANGFSDSHNALRILTFLESTYIPPSYISEMEKAAKQGDTILVSGMKTGSSKLKARIQEAVYKNVRPAEVRLLILENILLNPAYDVYLLVGTSIHYKVQKIRQGKITELSMPSDQYELQLQNSIPDPQGDPARPVAVLTQDTSRVTAMQMGQSNLVLGHRSIRMQGASRLPNSTIYVVEAGYLGFTVHPGDRWVLETGHLYAVTIEVFDRSSNKVYPSDNIRIEAVFPAEFFEVLSSSQNGSYHHVRAIQSGQTTISASLTSVVDQDGGVHVLQVPVWNQQEVDIHIPITLYPSILTFPWQPKTGAYQYTIKAHGGSGNFTWSSSSYMVATVTVKGVMTTGGDTGLSVIRAHDVQNPLHFGEMKVYVIEPSSMEFAPCQVEARVGHTLELPLTISGLMPGGSSEVVTLSDCSHFDLVVEVENQGVFQPLPGRLPPGPEHCSGVKVRADAQGSTTLLVSYTHGHVHLGAKITLAAYLPLKAVDPSSVAVVTLGSSKEMLFEGGPRPWVLEPSKFFRNVTSEDTGSISLSLLGPPASRNYQQHRVLVTCQALGEQVIALSVGNRPSLSNPFPAVEPTVVKSVCAPPSRLTLMPVYALPQLDLSCPLLQQNKQVVPVSSHRNPLLDLGAYDQQGRRFDNFSSLSIQWESFRPLLASIEVDQPMQLVSQDDGNGQKKLHGLQTVSVHEASGTTAISATATGYQQSHLSAAGVKQLRDPLVPVSASIELILVEDVRVSPEEVTIYNHPGVQVELHITEGSGYFFLNTSTQDIINVAYQDTRGVAMVHPLFPGSSTVMVHDLCLTFPAPAKATIHVSDIQELYVRVVDKVEIGKAVKAYVRVLDFYKKPFLAKYFTFMDLKLRAASQIITLVTLDEALDNYTATFLVHGVAIGQTSLSASVTDKSGQRVSSTAQQIEVFPPFRLIPRKVTLIIGAMIQITSEGGPQPQSNILFSINNESVAAVSSAGLVRGLMVGNGSVLGVVQAVDAETGKVIIVSQDHVEVEVLQLQAVRIRAPITRMRTGTQMPVYVTGITSNQSPFSFGNAVPGLTFHWSVTKRDVLDLRGRHHEVSIRLSPQYNFAMNVHGRVKGRTGLRVVVKALDPTAGQLHGLGKELSDEIQIQVFEKLRLLNPEVEAEQILMSPNSFIKLQTNRDGAAILSYRVLDGPEKAPIVHIDEKGFLVSGSGIGVSTLEVIAQEPFGTNQTVLVAVKVSPISYLRISMSPVLHTQHKEVLTALPLGMTVTFTVHFHDSSGDIFHAHNSDLNFATNRDDFVQIGKGATNNTCIIRTVSVGLTLLHVWDVEHLGLSDFVPLPVLQAITPELSGAVVVGDILCLASVLISLGGVSGTWSSSAGNVLYVDPKTGVAIARDAGPVTVYYEIAGHLKTFKEIVVVTPQKIVARRLHATQTSIQEATASKVTVSVGDRSSNLLGECSSAQREAIEALHPESLISCQLQFKQDVFDFPARDIFSVEPGFDTALGQYLCSVTMHRLTDKQLKHLNMKKTSLAVTASMPSSRTSVEKVGAEVPFSPGLYANQAEILLSNHYPSSEVKIFGAVEILENLEVRSGSPAVLASVKEKSFGLPSFITYTVGVLDPTAGSQGPLSTALTFSSPATNQAITIPVTVAFVLDRRGPGPYGASLLSHFLDSYQVMFFTFFALLAGTAVTIIAYHTVCAPRELASPLALTPHASPQHSPHYLASSPTAFNTLPSDRKASPPSGLWSPAYASH</sequence>
<proteinExistence type="evidence at protein level"/>
<organism>
    <name type="scientific">Rattus norvegicus</name>
    <name type="common">Rat</name>
    <dbReference type="NCBI Taxonomy" id="10116"/>
    <lineage>
        <taxon>Eukaryota</taxon>
        <taxon>Metazoa</taxon>
        <taxon>Chordata</taxon>
        <taxon>Craniata</taxon>
        <taxon>Vertebrata</taxon>
        <taxon>Euteleostomi</taxon>
        <taxon>Mammalia</taxon>
        <taxon>Eutheria</taxon>
        <taxon>Euarchontoglires</taxon>
        <taxon>Glires</taxon>
        <taxon>Rodentia</taxon>
        <taxon>Myomorpha</taxon>
        <taxon>Muroidea</taxon>
        <taxon>Muridae</taxon>
        <taxon>Murinae</taxon>
        <taxon>Rattus</taxon>
    </lineage>
</organism>
<accession>P11654</accession>
<feature type="signal peptide" evidence="7">
    <location>
        <begin position="1"/>
        <end position="25"/>
    </location>
</feature>
<feature type="chain" id="PRO_0000019926" description="Nuclear pore membrane glycoprotein 210">
    <location>
        <begin position="26"/>
        <end position="1886"/>
    </location>
</feature>
<feature type="topological domain" description="Perinuclear space" evidence="10">
    <location>
        <begin position="26"/>
        <end position="1805"/>
    </location>
</feature>
<feature type="transmembrane region" description="Helical" evidence="9">
    <location>
        <begin position="1806"/>
        <end position="1828"/>
    </location>
</feature>
<feature type="topological domain" description="Cytoplasmic" evidence="10">
    <location>
        <begin position="1829"/>
        <end position="1886"/>
    </location>
</feature>
<feature type="domain" description="BIG2" evidence="4">
    <location>
        <begin position="1078"/>
        <end position="1151"/>
    </location>
</feature>
<feature type="region of interest" description="Disordered" evidence="5">
    <location>
        <begin position="1866"/>
        <end position="1886"/>
    </location>
</feature>
<feature type="modified residue" description="Phosphoserine" evidence="3">
    <location>
        <position position="1839"/>
    </location>
</feature>
<feature type="modified residue" description="Phosphothreonine" evidence="2">
    <location>
        <position position="1844"/>
    </location>
</feature>
<feature type="modified residue" description="Phosphoserine" evidence="2">
    <location>
        <position position="1873"/>
    </location>
</feature>
<feature type="modified residue" description="Phosphoserine" evidence="2">
    <location>
        <position position="1876"/>
    </location>
</feature>
<feature type="modified residue" description="Phosphoserine" evidence="8">
    <location>
        <position position="1880"/>
    </location>
</feature>
<feature type="modified residue" description="Phosphoserine" evidence="2">
    <location>
        <position position="1885"/>
    </location>
</feature>
<feature type="glycosylation site" description="N-linked (GlcNAc...) asparagine" evidence="4">
    <location>
        <position position="337"/>
    </location>
</feature>
<feature type="glycosylation site" description="N-linked (GlcNAc...) asparagine" evidence="4">
    <location>
        <position position="484"/>
    </location>
</feature>
<feature type="glycosylation site" description="N-linked (GlcNAc...) asparagine" evidence="4">
    <location>
        <position position="681"/>
    </location>
</feature>
<feature type="glycosylation site" description="N-linked (GlcNAc...) asparagine" evidence="4">
    <location>
        <position position="1039"/>
    </location>
</feature>
<protein>
    <recommendedName>
        <fullName>Nuclear pore membrane glycoprotein 210</fullName>
        <shortName>Nuclear pore protein gp210</shortName>
    </recommendedName>
    <alternativeName>
        <fullName>Nuclear envelope pore membrane protein POM 210</fullName>
        <shortName>POM210</shortName>
    </alternativeName>
    <alternativeName>
        <fullName>Nucleoporin Nup210</fullName>
    </alternativeName>
    <alternativeName>
        <fullName>Pore membrane protein of 210 kDa</fullName>
    </alternativeName>
</protein>
<comment type="function">
    <text evidence="1">Nucleoporin essential for nuclear pore assembly and fusion, nuclear pore spacing, as well as structural integrity.</text>
</comment>
<comment type="subunit">
    <text evidence="6">Forms dimers and possibly higher-order oligomers.</text>
</comment>
<comment type="subcellular location">
    <subcellularLocation>
        <location>Nucleus</location>
        <location>Nuclear pore complex</location>
    </subcellularLocation>
    <subcellularLocation>
        <location>Nucleus membrane</location>
        <topology>Single-pass type I membrane protein</topology>
    </subcellularLocation>
    <subcellularLocation>
        <location>Endoplasmic reticulum membrane</location>
        <topology>Single-pass type I membrane protein</topology>
    </subcellularLocation>
</comment>
<comment type="PTM">
    <text evidence="7">N-glycosylated, but not all potential glycosylation sites may be used. Contains high-mannose type oligosaccharides.</text>
</comment>
<comment type="PTM">
    <text evidence="8">Phosphorylated at Ser-1880 in mitosis specifically; not phosphorylated in interphase.</text>
</comment>
<comment type="similarity">
    <text evidence="9">Belongs to the NUP210 family.</text>
</comment>
<dbReference type="EMBL" id="Y00826">
    <property type="protein sequence ID" value="CAA68759.1"/>
    <property type="molecule type" value="mRNA"/>
</dbReference>
<dbReference type="PIR" id="S04921">
    <property type="entry name" value="S04921"/>
</dbReference>
<dbReference type="RefSeq" id="NP_445774.1">
    <property type="nucleotide sequence ID" value="NM_053322.3"/>
</dbReference>
<dbReference type="SMR" id="P11654"/>
<dbReference type="CORUM" id="P11654"/>
<dbReference type="FunCoup" id="P11654">
    <property type="interactions" value="2519"/>
</dbReference>
<dbReference type="STRING" id="10116.ENSRNOP00000008888"/>
<dbReference type="GlyCosmos" id="P11654">
    <property type="glycosylation" value="4 sites, No reported glycans"/>
</dbReference>
<dbReference type="GlyGen" id="P11654">
    <property type="glycosylation" value="4 sites"/>
</dbReference>
<dbReference type="iPTMnet" id="P11654"/>
<dbReference type="PhosphoSitePlus" id="P11654"/>
<dbReference type="SwissPalm" id="P11654"/>
<dbReference type="jPOST" id="P11654"/>
<dbReference type="PaxDb" id="10116-ENSRNOP00000008888"/>
<dbReference type="Ensembl" id="ENSRNOT00000008888.5">
    <property type="protein sequence ID" value="ENSRNOP00000008888.3"/>
    <property type="gene ID" value="ENSRNOG00000005390.5"/>
</dbReference>
<dbReference type="GeneID" id="58958"/>
<dbReference type="KEGG" id="rno:58958"/>
<dbReference type="UCSC" id="RGD:69339">
    <property type="organism name" value="rat"/>
</dbReference>
<dbReference type="AGR" id="RGD:69339"/>
<dbReference type="CTD" id="23225"/>
<dbReference type="RGD" id="69339">
    <property type="gene designation" value="Nup210"/>
</dbReference>
<dbReference type="eggNOG" id="KOG1833">
    <property type="taxonomic scope" value="Eukaryota"/>
</dbReference>
<dbReference type="GeneTree" id="ENSGT00390000009491"/>
<dbReference type="HOGENOM" id="CLU_001205_1_1_1"/>
<dbReference type="InParanoid" id="P11654"/>
<dbReference type="OMA" id="SYTHGNI"/>
<dbReference type="OrthoDB" id="361283at2759"/>
<dbReference type="PhylomeDB" id="P11654"/>
<dbReference type="TreeFam" id="TF313331"/>
<dbReference type="Reactome" id="R-RNO-159227">
    <property type="pathway name" value="Transport of the SLBP independent Mature mRNA"/>
</dbReference>
<dbReference type="Reactome" id="R-RNO-159230">
    <property type="pathway name" value="Transport of the SLBP Dependant Mature mRNA"/>
</dbReference>
<dbReference type="Reactome" id="R-RNO-159231">
    <property type="pathway name" value="Transport of Mature mRNA Derived from an Intronless Transcript"/>
</dbReference>
<dbReference type="Reactome" id="R-RNO-159236">
    <property type="pathway name" value="Transport of Mature mRNA derived from an Intron-Containing Transcript"/>
</dbReference>
<dbReference type="Reactome" id="R-RNO-170822">
    <property type="pathway name" value="Regulation of Glucokinase by Glucokinase Regulatory Protein"/>
</dbReference>
<dbReference type="Reactome" id="R-RNO-191859">
    <property type="pathway name" value="snRNP Assembly"/>
</dbReference>
<dbReference type="Reactome" id="R-RNO-3108214">
    <property type="pathway name" value="SUMOylation of DNA damage response and repair proteins"/>
</dbReference>
<dbReference type="Reactome" id="R-RNO-3232142">
    <property type="pathway name" value="SUMOylation of ubiquitinylation proteins"/>
</dbReference>
<dbReference type="Reactome" id="R-RNO-3301854">
    <property type="pathway name" value="Nuclear Pore Complex (NPC) Disassembly"/>
</dbReference>
<dbReference type="Reactome" id="R-RNO-3371453">
    <property type="pathway name" value="Regulation of HSF1-mediated heat shock response"/>
</dbReference>
<dbReference type="Reactome" id="R-RNO-4085377">
    <property type="pathway name" value="SUMOylation of SUMOylation proteins"/>
</dbReference>
<dbReference type="Reactome" id="R-RNO-4551638">
    <property type="pathway name" value="SUMOylation of chromatin organization proteins"/>
</dbReference>
<dbReference type="Reactome" id="R-RNO-4570464">
    <property type="pathway name" value="SUMOylation of RNA binding proteins"/>
</dbReference>
<dbReference type="Reactome" id="R-RNO-4615885">
    <property type="pathway name" value="SUMOylation of DNA replication proteins"/>
</dbReference>
<dbReference type="Reactome" id="R-RNO-5578749">
    <property type="pathway name" value="Transcriptional regulation by small RNAs"/>
</dbReference>
<dbReference type="PRO" id="PR:P11654"/>
<dbReference type="Proteomes" id="UP000002494">
    <property type="component" value="Chromosome 4"/>
</dbReference>
<dbReference type="Bgee" id="ENSRNOG00000005390">
    <property type="expression patterns" value="Expressed in spleen and 18 other cell types or tissues"/>
</dbReference>
<dbReference type="GO" id="GO:0005789">
    <property type="term" value="C:endoplasmic reticulum membrane"/>
    <property type="evidence" value="ECO:0007669"/>
    <property type="project" value="UniProtKB-SubCell"/>
</dbReference>
<dbReference type="GO" id="GO:0005635">
    <property type="term" value="C:nuclear envelope"/>
    <property type="evidence" value="ECO:0000266"/>
    <property type="project" value="RGD"/>
</dbReference>
<dbReference type="GO" id="GO:0031965">
    <property type="term" value="C:nuclear membrane"/>
    <property type="evidence" value="ECO:0007669"/>
    <property type="project" value="UniProtKB-SubCell"/>
</dbReference>
<dbReference type="GO" id="GO:0005643">
    <property type="term" value="C:nuclear pore"/>
    <property type="evidence" value="ECO:0000318"/>
    <property type="project" value="GO_Central"/>
</dbReference>
<dbReference type="GO" id="GO:0017056">
    <property type="term" value="F:structural constituent of nuclear pore"/>
    <property type="evidence" value="ECO:0000303"/>
    <property type="project" value="RGD"/>
</dbReference>
<dbReference type="GO" id="GO:0051028">
    <property type="term" value="P:mRNA transport"/>
    <property type="evidence" value="ECO:0007669"/>
    <property type="project" value="UniProtKB-KW"/>
</dbReference>
<dbReference type="GO" id="GO:0015031">
    <property type="term" value="P:protein transport"/>
    <property type="evidence" value="ECO:0007669"/>
    <property type="project" value="UniProtKB-KW"/>
</dbReference>
<dbReference type="GO" id="GO:0065003">
    <property type="term" value="P:protein-containing complex assembly"/>
    <property type="evidence" value="ECO:0000314"/>
    <property type="project" value="RGD"/>
</dbReference>
<dbReference type="InterPro" id="IPR003343">
    <property type="entry name" value="Big_2"/>
</dbReference>
<dbReference type="InterPro" id="IPR056897">
    <property type="entry name" value="Ig_NUP210_4th"/>
</dbReference>
<dbReference type="InterPro" id="IPR056898">
    <property type="entry name" value="Ig_NUP210_6th"/>
</dbReference>
<dbReference type="InterPro" id="IPR056899">
    <property type="entry name" value="Ig_NUP210_9th"/>
</dbReference>
<dbReference type="InterPro" id="IPR008964">
    <property type="entry name" value="Invasin/intimin_cell_adhesion"/>
</dbReference>
<dbReference type="InterPro" id="IPR045197">
    <property type="entry name" value="NUP210-like"/>
</dbReference>
<dbReference type="InterPro" id="IPR055096">
    <property type="entry name" value="NUP210_Ig1"/>
</dbReference>
<dbReference type="InterPro" id="IPR055094">
    <property type="entry name" value="NUP210_Ig15"/>
</dbReference>
<dbReference type="InterPro" id="IPR055097">
    <property type="entry name" value="NUP210_Ig2"/>
</dbReference>
<dbReference type="InterPro" id="IPR055098">
    <property type="entry name" value="NUP210_Ig3"/>
</dbReference>
<dbReference type="InterPro" id="IPR055099">
    <property type="entry name" value="NUP210_Ig7"/>
</dbReference>
<dbReference type="InterPro" id="IPR055095">
    <property type="entry name" value="NUP210_Ig_C"/>
</dbReference>
<dbReference type="PANTHER" id="PTHR23019:SF2">
    <property type="entry name" value="NUCLEAR PORE MEMBRANE GLYCOPROTEIN 210"/>
    <property type="match status" value="1"/>
</dbReference>
<dbReference type="PANTHER" id="PTHR23019">
    <property type="entry name" value="NUCLEAR PORE MEMBRANE GLYCOPROTEIN GP210-RELATED"/>
    <property type="match status" value="1"/>
</dbReference>
<dbReference type="Pfam" id="PF02368">
    <property type="entry name" value="Big_2"/>
    <property type="match status" value="1"/>
</dbReference>
<dbReference type="Pfam" id="PF22959">
    <property type="entry name" value="Ig_NUP210_15th"/>
    <property type="match status" value="1"/>
</dbReference>
<dbReference type="Pfam" id="PF25354">
    <property type="entry name" value="Ig_NUP210_16th"/>
    <property type="match status" value="1"/>
</dbReference>
<dbReference type="Pfam" id="PF22967">
    <property type="entry name" value="Ig_NUP210_1st"/>
    <property type="match status" value="1"/>
</dbReference>
<dbReference type="Pfam" id="PF22969">
    <property type="entry name" value="Ig_NUP210_2nd"/>
    <property type="match status" value="1"/>
</dbReference>
<dbReference type="Pfam" id="PF22963">
    <property type="entry name" value="Ig_NUP210_3rd"/>
    <property type="match status" value="1"/>
</dbReference>
<dbReference type="Pfam" id="PF24991">
    <property type="entry name" value="Ig_NUP210_4th"/>
    <property type="match status" value="1"/>
</dbReference>
<dbReference type="Pfam" id="PF24935">
    <property type="entry name" value="Ig_NUP210_6th"/>
    <property type="match status" value="1"/>
</dbReference>
<dbReference type="Pfam" id="PF22962">
    <property type="entry name" value="Ig_NUP210_7th"/>
    <property type="match status" value="1"/>
</dbReference>
<dbReference type="Pfam" id="PF24902">
    <property type="entry name" value="Ig_NUP210_9th"/>
    <property type="match status" value="1"/>
</dbReference>
<dbReference type="Pfam" id="PF22957">
    <property type="entry name" value="NUP210_Ig"/>
    <property type="match status" value="1"/>
</dbReference>
<dbReference type="SMART" id="SM00635">
    <property type="entry name" value="BID_2"/>
    <property type="match status" value="1"/>
</dbReference>
<dbReference type="SUPFAM" id="SSF49373">
    <property type="entry name" value="Invasin/intimin cell-adhesion fragments"/>
    <property type="match status" value="1"/>
</dbReference>